<protein>
    <recommendedName>
        <fullName evidence="2">Superoxide dismutase [Cu-Zn]</fullName>
        <ecNumber>1.15.1.1</ecNumber>
    </recommendedName>
    <alternativeName>
        <fullName evidence="2">Superoxide dismutase 1</fullName>
    </alternativeName>
</protein>
<sequence>MVVKAVCVINGDAKGTVFFEQEDNGAPVKVTGEVTGLGKGLHGFHVHEFGDNTNGCMSSGPHFNPHSKEHGAPGDENRHLGDLGNIEASGSGPTAVNITDSKITLVGANSIIGRTVVVHADPDDLGKGGHELSKTTGNAGARIGCGVIGIAKI</sequence>
<comment type="function">
    <text>Destroys radicals which are normally produced within the cells and which are toxic to biological systems.</text>
</comment>
<comment type="catalytic activity">
    <reaction>
        <text>2 superoxide + 2 H(+) = H2O2 + O2</text>
        <dbReference type="Rhea" id="RHEA:20696"/>
        <dbReference type="ChEBI" id="CHEBI:15378"/>
        <dbReference type="ChEBI" id="CHEBI:15379"/>
        <dbReference type="ChEBI" id="CHEBI:16240"/>
        <dbReference type="ChEBI" id="CHEBI:18421"/>
        <dbReference type="EC" id="1.15.1.1"/>
    </reaction>
</comment>
<comment type="cofactor">
    <cofactor evidence="1">
        <name>Cu cation</name>
        <dbReference type="ChEBI" id="CHEBI:23378"/>
    </cofactor>
    <text evidence="1">Binds 1 copper ion per subunit.</text>
</comment>
<comment type="cofactor">
    <cofactor evidence="1">
        <name>Zn(2+)</name>
        <dbReference type="ChEBI" id="CHEBI:29105"/>
    </cofactor>
    <text evidence="1">Binds 1 zinc ion per subunit.</text>
</comment>
<comment type="subunit">
    <text>Homodimer.</text>
</comment>
<comment type="subcellular location">
    <subcellularLocation>
        <location>Cytoplasm</location>
    </subcellularLocation>
</comment>
<comment type="similarity">
    <text evidence="3">Belongs to the Cu-Zn superoxide dismutase family.</text>
</comment>
<gene>
    <name evidence="2" type="primary">Sod1</name>
    <name evidence="2" type="synonym">Sod</name>
    <name type="ORF">GK20556</name>
</gene>
<feature type="initiator methionine" description="Removed" evidence="1">
    <location>
        <position position="1"/>
    </location>
</feature>
<feature type="chain" id="PRO_0000164099" description="Superoxide dismutase [Cu-Zn]">
    <location>
        <begin position="2"/>
        <end position="153"/>
    </location>
</feature>
<feature type="binding site" evidence="1">
    <location>
        <position position="45"/>
    </location>
    <ligand>
        <name>Cu cation</name>
        <dbReference type="ChEBI" id="CHEBI:23378"/>
        <note>catalytic</note>
    </ligand>
</feature>
<feature type="binding site" evidence="1">
    <location>
        <position position="47"/>
    </location>
    <ligand>
        <name>Cu cation</name>
        <dbReference type="ChEBI" id="CHEBI:23378"/>
        <note>catalytic</note>
    </ligand>
</feature>
<feature type="binding site" evidence="1">
    <location>
        <position position="62"/>
    </location>
    <ligand>
        <name>Cu cation</name>
        <dbReference type="ChEBI" id="CHEBI:23378"/>
        <note>catalytic</note>
    </ligand>
</feature>
<feature type="binding site" evidence="1">
    <location>
        <position position="62"/>
    </location>
    <ligand>
        <name>Zn(2+)</name>
        <dbReference type="ChEBI" id="CHEBI:29105"/>
        <note>structural</note>
    </ligand>
</feature>
<feature type="binding site" evidence="1">
    <location>
        <position position="70"/>
    </location>
    <ligand>
        <name>Zn(2+)</name>
        <dbReference type="ChEBI" id="CHEBI:29105"/>
        <note>structural</note>
    </ligand>
</feature>
<feature type="binding site" evidence="1">
    <location>
        <position position="79"/>
    </location>
    <ligand>
        <name>Zn(2+)</name>
        <dbReference type="ChEBI" id="CHEBI:29105"/>
        <note>structural</note>
    </ligand>
</feature>
<feature type="binding site" evidence="1">
    <location>
        <position position="82"/>
    </location>
    <ligand>
        <name>Zn(2+)</name>
        <dbReference type="ChEBI" id="CHEBI:29105"/>
        <note>structural</note>
    </ligand>
</feature>
<feature type="binding site" evidence="1">
    <location>
        <position position="119"/>
    </location>
    <ligand>
        <name>Cu cation</name>
        <dbReference type="ChEBI" id="CHEBI:23378"/>
        <note>catalytic</note>
    </ligand>
</feature>
<feature type="disulfide bond" evidence="1">
    <location>
        <begin position="56"/>
        <end position="145"/>
    </location>
</feature>
<name>SODC_DROWI</name>
<evidence type="ECO:0000250" key="1"/>
<evidence type="ECO:0000250" key="2">
    <source>
        <dbReference type="UniProtKB" id="P61851"/>
    </source>
</evidence>
<evidence type="ECO:0000305" key="3"/>
<dbReference type="EC" id="1.15.1.1"/>
<dbReference type="EMBL" id="L13281">
    <property type="protein sequence ID" value="AAA57250.1"/>
    <property type="molecule type" value="Genomic_DNA"/>
</dbReference>
<dbReference type="EMBL" id="CH964101">
    <property type="protein sequence ID" value="EDW79581.1"/>
    <property type="molecule type" value="Genomic_DNA"/>
</dbReference>
<dbReference type="SMR" id="P41973"/>
<dbReference type="STRING" id="7260.P41973"/>
<dbReference type="EnsemblMetazoa" id="FBtr0251207">
    <property type="protein sequence ID" value="FBpp0249699"/>
    <property type="gene ID" value="FBgn0013156"/>
</dbReference>
<dbReference type="EnsemblMetazoa" id="XM_002068559.4">
    <property type="protein sequence ID" value="XP_002068595.1"/>
    <property type="gene ID" value="LOC6645808"/>
</dbReference>
<dbReference type="GeneID" id="6645808"/>
<dbReference type="KEGG" id="dwi:6645808"/>
<dbReference type="CTD" id="6647"/>
<dbReference type="eggNOG" id="KOG0441">
    <property type="taxonomic scope" value="Eukaryota"/>
</dbReference>
<dbReference type="HOGENOM" id="CLU_056632_4_1_1"/>
<dbReference type="OMA" id="AQRGFHI"/>
<dbReference type="OrthoDB" id="2015551at2759"/>
<dbReference type="PhylomeDB" id="P41973"/>
<dbReference type="Proteomes" id="UP000007798">
    <property type="component" value="Unassembled WGS sequence"/>
</dbReference>
<dbReference type="GO" id="GO:0005777">
    <property type="term" value="C:peroxisome"/>
    <property type="evidence" value="ECO:0007669"/>
    <property type="project" value="EnsemblMetazoa"/>
</dbReference>
<dbReference type="GO" id="GO:0005507">
    <property type="term" value="F:copper ion binding"/>
    <property type="evidence" value="ECO:0007669"/>
    <property type="project" value="InterPro"/>
</dbReference>
<dbReference type="GO" id="GO:0042803">
    <property type="term" value="F:protein homodimerization activity"/>
    <property type="evidence" value="ECO:0007669"/>
    <property type="project" value="EnsemblMetazoa"/>
</dbReference>
<dbReference type="GO" id="GO:0004784">
    <property type="term" value="F:superoxide dismutase activity"/>
    <property type="evidence" value="ECO:0007669"/>
    <property type="project" value="UniProtKB-EC"/>
</dbReference>
<dbReference type="GO" id="GO:0008340">
    <property type="term" value="P:determination of adult lifespan"/>
    <property type="evidence" value="ECO:0007669"/>
    <property type="project" value="EnsemblMetazoa"/>
</dbReference>
<dbReference type="GO" id="GO:1901526">
    <property type="term" value="P:positive regulation of mitophagy"/>
    <property type="evidence" value="ECO:0007669"/>
    <property type="project" value="EnsemblMetazoa"/>
</dbReference>
<dbReference type="GO" id="GO:0048167">
    <property type="term" value="P:regulation of synaptic plasticity"/>
    <property type="evidence" value="ECO:0007669"/>
    <property type="project" value="EnsemblMetazoa"/>
</dbReference>
<dbReference type="CDD" id="cd00305">
    <property type="entry name" value="Cu-Zn_Superoxide_Dismutase"/>
    <property type="match status" value="1"/>
</dbReference>
<dbReference type="FunFam" id="2.60.40.200:FF:000001">
    <property type="entry name" value="Superoxide dismutase [Cu-Zn]"/>
    <property type="match status" value="1"/>
</dbReference>
<dbReference type="Gene3D" id="2.60.40.200">
    <property type="entry name" value="Superoxide dismutase, copper/zinc binding domain"/>
    <property type="match status" value="1"/>
</dbReference>
<dbReference type="InterPro" id="IPR036423">
    <property type="entry name" value="SOD-like_Cu/Zn_dom_sf"/>
</dbReference>
<dbReference type="InterPro" id="IPR024134">
    <property type="entry name" value="SOD_Cu/Zn_/chaperone"/>
</dbReference>
<dbReference type="InterPro" id="IPR018152">
    <property type="entry name" value="SOD_Cu/Zn_BS"/>
</dbReference>
<dbReference type="InterPro" id="IPR001424">
    <property type="entry name" value="SOD_Cu_Zn_dom"/>
</dbReference>
<dbReference type="PANTHER" id="PTHR10003">
    <property type="entry name" value="SUPEROXIDE DISMUTASE CU-ZN -RELATED"/>
    <property type="match status" value="1"/>
</dbReference>
<dbReference type="Pfam" id="PF00080">
    <property type="entry name" value="Sod_Cu"/>
    <property type="match status" value="1"/>
</dbReference>
<dbReference type="PRINTS" id="PR00068">
    <property type="entry name" value="CUZNDISMTASE"/>
</dbReference>
<dbReference type="SUPFAM" id="SSF49329">
    <property type="entry name" value="Cu,Zn superoxide dismutase-like"/>
    <property type="match status" value="1"/>
</dbReference>
<dbReference type="PROSITE" id="PS00087">
    <property type="entry name" value="SOD_CU_ZN_1"/>
    <property type="match status" value="1"/>
</dbReference>
<dbReference type="PROSITE" id="PS00332">
    <property type="entry name" value="SOD_CU_ZN_2"/>
    <property type="match status" value="1"/>
</dbReference>
<keyword id="KW-0049">Antioxidant</keyword>
<keyword id="KW-0186">Copper</keyword>
<keyword id="KW-0963">Cytoplasm</keyword>
<keyword id="KW-1015">Disulfide bond</keyword>
<keyword id="KW-0479">Metal-binding</keyword>
<keyword id="KW-0560">Oxidoreductase</keyword>
<keyword id="KW-1185">Reference proteome</keyword>
<keyword id="KW-0862">Zinc</keyword>
<accession>P41973</accession>
<accession>B4N5E2</accession>
<proteinExistence type="inferred from homology"/>
<organism>
    <name type="scientific">Drosophila willistoni</name>
    <name type="common">Fruit fly</name>
    <dbReference type="NCBI Taxonomy" id="7260"/>
    <lineage>
        <taxon>Eukaryota</taxon>
        <taxon>Metazoa</taxon>
        <taxon>Ecdysozoa</taxon>
        <taxon>Arthropoda</taxon>
        <taxon>Hexapoda</taxon>
        <taxon>Insecta</taxon>
        <taxon>Pterygota</taxon>
        <taxon>Neoptera</taxon>
        <taxon>Endopterygota</taxon>
        <taxon>Diptera</taxon>
        <taxon>Brachycera</taxon>
        <taxon>Muscomorpha</taxon>
        <taxon>Ephydroidea</taxon>
        <taxon>Drosophilidae</taxon>
        <taxon>Drosophila</taxon>
        <taxon>Sophophora</taxon>
    </lineage>
</organism>
<reference key="1">
    <citation type="journal article" date="1994" name="Gene">
        <title>Characterization of a Cu/Zn superoxide dismutase-encoding gene region in Drosophila willistoni.</title>
        <authorList>
            <person name="Kwiatowski J."/>
            <person name="Latorre A."/>
            <person name="Skarecky D."/>
            <person name="Ayala F.J."/>
        </authorList>
    </citation>
    <scope>NUCLEOTIDE SEQUENCE [GENOMIC DNA]</scope>
</reference>
<reference key="2">
    <citation type="journal article" date="2007" name="Nature">
        <title>Evolution of genes and genomes on the Drosophila phylogeny.</title>
        <authorList>
            <consortium name="Drosophila 12 genomes consortium"/>
        </authorList>
    </citation>
    <scope>NUCLEOTIDE SEQUENCE [LARGE SCALE GENOMIC DNA]</scope>
    <source>
        <strain>Tucson 14030-0811.24</strain>
    </source>
</reference>